<protein>
    <recommendedName>
        <fullName evidence="1">NADH-quinone oxidoreductase subunit C</fullName>
        <ecNumber evidence="1">7.1.1.-</ecNumber>
    </recommendedName>
    <alternativeName>
        <fullName evidence="1">NADH dehydrogenase I subunit C</fullName>
    </alternativeName>
    <alternativeName>
        <fullName evidence="1">NDH-1 subunit C</fullName>
    </alternativeName>
</protein>
<dbReference type="EC" id="7.1.1.-" evidence="1"/>
<dbReference type="EMBL" id="CP001096">
    <property type="protein sequence ID" value="ACF01800.1"/>
    <property type="molecule type" value="Genomic_DNA"/>
</dbReference>
<dbReference type="RefSeq" id="WP_011158499.1">
    <property type="nucleotide sequence ID" value="NC_011004.1"/>
</dbReference>
<dbReference type="SMR" id="B3Q7N4"/>
<dbReference type="KEGG" id="rpt:Rpal_3298"/>
<dbReference type="HOGENOM" id="CLU_042628_2_1_5"/>
<dbReference type="OrthoDB" id="9803286at2"/>
<dbReference type="Proteomes" id="UP000001725">
    <property type="component" value="Chromosome"/>
</dbReference>
<dbReference type="GO" id="GO:0005886">
    <property type="term" value="C:plasma membrane"/>
    <property type="evidence" value="ECO:0007669"/>
    <property type="project" value="UniProtKB-SubCell"/>
</dbReference>
<dbReference type="GO" id="GO:0008137">
    <property type="term" value="F:NADH dehydrogenase (ubiquinone) activity"/>
    <property type="evidence" value="ECO:0007669"/>
    <property type="project" value="InterPro"/>
</dbReference>
<dbReference type="GO" id="GO:0050136">
    <property type="term" value="F:NADH:ubiquinone reductase (non-electrogenic) activity"/>
    <property type="evidence" value="ECO:0007669"/>
    <property type="project" value="UniProtKB-UniRule"/>
</dbReference>
<dbReference type="GO" id="GO:0048038">
    <property type="term" value="F:quinone binding"/>
    <property type="evidence" value="ECO:0007669"/>
    <property type="project" value="UniProtKB-KW"/>
</dbReference>
<dbReference type="Gene3D" id="3.30.460.80">
    <property type="entry name" value="NADH:ubiquinone oxidoreductase, 30kDa subunit"/>
    <property type="match status" value="1"/>
</dbReference>
<dbReference type="HAMAP" id="MF_01357">
    <property type="entry name" value="NDH1_NuoC"/>
    <property type="match status" value="1"/>
</dbReference>
<dbReference type="InterPro" id="IPR010218">
    <property type="entry name" value="NADH_DH_suC"/>
</dbReference>
<dbReference type="InterPro" id="IPR037232">
    <property type="entry name" value="NADH_quin_OxRdtase_su_C/D-like"/>
</dbReference>
<dbReference type="InterPro" id="IPR001268">
    <property type="entry name" value="NADH_UbQ_OxRdtase_30kDa_su"/>
</dbReference>
<dbReference type="InterPro" id="IPR020396">
    <property type="entry name" value="NADH_UbQ_OxRdtase_CS"/>
</dbReference>
<dbReference type="NCBIfam" id="TIGR01961">
    <property type="entry name" value="NuoC_fam"/>
    <property type="match status" value="1"/>
</dbReference>
<dbReference type="NCBIfam" id="NF004733">
    <property type="entry name" value="PRK06074.1-5"/>
    <property type="match status" value="1"/>
</dbReference>
<dbReference type="PANTHER" id="PTHR10884:SF14">
    <property type="entry name" value="NADH DEHYDROGENASE [UBIQUINONE] IRON-SULFUR PROTEIN 3, MITOCHONDRIAL"/>
    <property type="match status" value="1"/>
</dbReference>
<dbReference type="PANTHER" id="PTHR10884">
    <property type="entry name" value="NADH DEHYDROGENASE UBIQUINONE IRON-SULFUR PROTEIN 3"/>
    <property type="match status" value="1"/>
</dbReference>
<dbReference type="Pfam" id="PF00329">
    <property type="entry name" value="Complex1_30kDa"/>
    <property type="match status" value="1"/>
</dbReference>
<dbReference type="SUPFAM" id="SSF143243">
    <property type="entry name" value="Nqo5-like"/>
    <property type="match status" value="1"/>
</dbReference>
<dbReference type="PROSITE" id="PS00542">
    <property type="entry name" value="COMPLEX1_30K"/>
    <property type="match status" value="1"/>
</dbReference>
<organism>
    <name type="scientific">Rhodopseudomonas palustris (strain TIE-1)</name>
    <dbReference type="NCBI Taxonomy" id="395960"/>
    <lineage>
        <taxon>Bacteria</taxon>
        <taxon>Pseudomonadati</taxon>
        <taxon>Pseudomonadota</taxon>
        <taxon>Alphaproteobacteria</taxon>
        <taxon>Hyphomicrobiales</taxon>
        <taxon>Nitrobacteraceae</taxon>
        <taxon>Rhodopseudomonas</taxon>
    </lineage>
</organism>
<reference key="1">
    <citation type="submission" date="2008-05" db="EMBL/GenBank/DDBJ databases">
        <title>Complete sequence of Rhodopseudomonas palustris TIE-1.</title>
        <authorList>
            <consortium name="US DOE Joint Genome Institute"/>
            <person name="Lucas S."/>
            <person name="Copeland A."/>
            <person name="Lapidus A."/>
            <person name="Glavina del Rio T."/>
            <person name="Dalin E."/>
            <person name="Tice H."/>
            <person name="Pitluck S."/>
            <person name="Chain P."/>
            <person name="Malfatti S."/>
            <person name="Shin M."/>
            <person name="Vergez L."/>
            <person name="Lang D."/>
            <person name="Schmutz J."/>
            <person name="Larimer F."/>
            <person name="Land M."/>
            <person name="Hauser L."/>
            <person name="Kyrpides N."/>
            <person name="Mikhailova N."/>
            <person name="Emerson D."/>
            <person name="Newman D.K."/>
            <person name="Roden E."/>
            <person name="Richardson P."/>
        </authorList>
    </citation>
    <scope>NUCLEOTIDE SEQUENCE [LARGE SCALE GENOMIC DNA]</scope>
    <source>
        <strain>TIE-1</strain>
    </source>
</reference>
<proteinExistence type="inferred from homology"/>
<feature type="chain" id="PRO_0000358189" description="NADH-quinone oxidoreductase subunit C">
    <location>
        <begin position="1"/>
        <end position="204"/>
    </location>
</feature>
<sequence>MDDNGLDTLGQTIVGALPGIATGHSVGFGQLTLTVDAGKIVEVMRLLRDDPRFRFISFIDMTAVDYPGRAERFEIVYHLLSPKLNERVRVKAEVGETTLVPSIIEVFPGADWFEREAYDLYGIVITGHPDMRRLLTDYGFDGHPLRKDFPLTGFVEVRYDDDQKRVIYEPVRLNQEFRKFDFLSPWEGADYPVLPGDEKAGVKS</sequence>
<keyword id="KW-0997">Cell inner membrane</keyword>
<keyword id="KW-1003">Cell membrane</keyword>
<keyword id="KW-0472">Membrane</keyword>
<keyword id="KW-0520">NAD</keyword>
<keyword id="KW-0874">Quinone</keyword>
<keyword id="KW-1278">Translocase</keyword>
<keyword id="KW-0813">Transport</keyword>
<keyword id="KW-0830">Ubiquinone</keyword>
<accession>B3Q7N4</accession>
<gene>
    <name evidence="1" type="primary">nuoC</name>
    <name type="ordered locus">Rpal_3298</name>
</gene>
<name>NUOC_RHOPT</name>
<evidence type="ECO:0000255" key="1">
    <source>
        <dbReference type="HAMAP-Rule" id="MF_01357"/>
    </source>
</evidence>
<comment type="function">
    <text evidence="1">NDH-1 shuttles electrons from NADH, via FMN and iron-sulfur (Fe-S) centers, to quinones in the respiratory chain. The immediate electron acceptor for the enzyme in this species is believed to be ubiquinone. Couples the redox reaction to proton translocation (for every two electrons transferred, four hydrogen ions are translocated across the cytoplasmic membrane), and thus conserves the redox energy in a proton gradient.</text>
</comment>
<comment type="catalytic activity">
    <reaction evidence="1">
        <text>a quinone + NADH + 5 H(+)(in) = a quinol + NAD(+) + 4 H(+)(out)</text>
        <dbReference type="Rhea" id="RHEA:57888"/>
        <dbReference type="ChEBI" id="CHEBI:15378"/>
        <dbReference type="ChEBI" id="CHEBI:24646"/>
        <dbReference type="ChEBI" id="CHEBI:57540"/>
        <dbReference type="ChEBI" id="CHEBI:57945"/>
        <dbReference type="ChEBI" id="CHEBI:132124"/>
    </reaction>
</comment>
<comment type="subunit">
    <text evidence="1">NDH-1 is composed of 14 different subunits. Subunits NuoB, C, D, E, F, and G constitute the peripheral sector of the complex.</text>
</comment>
<comment type="subcellular location">
    <subcellularLocation>
        <location evidence="1">Cell inner membrane</location>
        <topology evidence="1">Peripheral membrane protein</topology>
        <orientation evidence="1">Cytoplasmic side</orientation>
    </subcellularLocation>
</comment>
<comment type="similarity">
    <text evidence="1">Belongs to the complex I 30 kDa subunit family.</text>
</comment>